<protein>
    <recommendedName>
        <fullName evidence="1">Lipoyl synthase</fullName>
        <ecNumber evidence="1">2.8.1.8</ecNumber>
    </recommendedName>
    <alternativeName>
        <fullName evidence="1">Lip-syn</fullName>
        <shortName evidence="1">LS</shortName>
    </alternativeName>
    <alternativeName>
        <fullName evidence="1">Lipoate synthase</fullName>
    </alternativeName>
    <alternativeName>
        <fullName evidence="1">Lipoic acid synthase</fullName>
    </alternativeName>
    <alternativeName>
        <fullName evidence="1">Sulfur insertion protein LipA</fullName>
    </alternativeName>
</protein>
<proteinExistence type="inferred from homology"/>
<gene>
    <name evidence="1" type="primary">lipA</name>
    <name type="ordered locus">NSE_0322</name>
</gene>
<keyword id="KW-0004">4Fe-4S</keyword>
<keyword id="KW-0963">Cytoplasm</keyword>
<keyword id="KW-0408">Iron</keyword>
<keyword id="KW-0411">Iron-sulfur</keyword>
<keyword id="KW-0479">Metal-binding</keyword>
<keyword id="KW-0949">S-adenosyl-L-methionine</keyword>
<keyword id="KW-0808">Transferase</keyword>
<evidence type="ECO:0000255" key="1">
    <source>
        <dbReference type="HAMAP-Rule" id="MF_00206"/>
    </source>
</evidence>
<evidence type="ECO:0000255" key="2">
    <source>
        <dbReference type="PROSITE-ProRule" id="PRU01266"/>
    </source>
</evidence>
<feature type="chain" id="PRO_1000012242" description="Lipoyl synthase">
    <location>
        <begin position="1"/>
        <end position="296"/>
    </location>
</feature>
<feature type="domain" description="Radical SAM core" evidence="2">
    <location>
        <begin position="47"/>
        <end position="263"/>
    </location>
</feature>
<feature type="binding site" evidence="1">
    <location>
        <position position="35"/>
    </location>
    <ligand>
        <name>[4Fe-4S] cluster</name>
        <dbReference type="ChEBI" id="CHEBI:49883"/>
        <label>1</label>
    </ligand>
</feature>
<feature type="binding site" evidence="1">
    <location>
        <position position="40"/>
    </location>
    <ligand>
        <name>[4Fe-4S] cluster</name>
        <dbReference type="ChEBI" id="CHEBI:49883"/>
        <label>1</label>
    </ligand>
</feature>
<feature type="binding site" evidence="1">
    <location>
        <position position="46"/>
    </location>
    <ligand>
        <name>[4Fe-4S] cluster</name>
        <dbReference type="ChEBI" id="CHEBI:49883"/>
        <label>1</label>
    </ligand>
</feature>
<feature type="binding site" evidence="1">
    <location>
        <position position="61"/>
    </location>
    <ligand>
        <name>[4Fe-4S] cluster</name>
        <dbReference type="ChEBI" id="CHEBI:49883"/>
        <label>2</label>
        <note>4Fe-4S-S-AdoMet</note>
    </ligand>
</feature>
<feature type="binding site" evidence="1">
    <location>
        <position position="65"/>
    </location>
    <ligand>
        <name>[4Fe-4S] cluster</name>
        <dbReference type="ChEBI" id="CHEBI:49883"/>
        <label>2</label>
        <note>4Fe-4S-S-AdoMet</note>
    </ligand>
</feature>
<feature type="binding site" evidence="1">
    <location>
        <position position="68"/>
    </location>
    <ligand>
        <name>[4Fe-4S] cluster</name>
        <dbReference type="ChEBI" id="CHEBI:49883"/>
        <label>2</label>
        <note>4Fe-4S-S-AdoMet</note>
    </ligand>
</feature>
<feature type="binding site" evidence="1">
    <location>
        <position position="274"/>
    </location>
    <ligand>
        <name>[4Fe-4S] cluster</name>
        <dbReference type="ChEBI" id="CHEBI:49883"/>
        <label>1</label>
    </ligand>
</feature>
<reference key="1">
    <citation type="journal article" date="2006" name="PLoS Genet.">
        <title>Comparative genomics of emerging human ehrlichiosis agents.</title>
        <authorList>
            <person name="Dunning Hotopp J.C."/>
            <person name="Lin M."/>
            <person name="Madupu R."/>
            <person name="Crabtree J."/>
            <person name="Angiuoli S.V."/>
            <person name="Eisen J.A."/>
            <person name="Seshadri R."/>
            <person name="Ren Q."/>
            <person name="Wu M."/>
            <person name="Utterback T.R."/>
            <person name="Smith S."/>
            <person name="Lewis M."/>
            <person name="Khouri H."/>
            <person name="Zhang C."/>
            <person name="Niu H."/>
            <person name="Lin Q."/>
            <person name="Ohashi N."/>
            <person name="Zhi N."/>
            <person name="Nelson W.C."/>
            <person name="Brinkac L.M."/>
            <person name="Dodson R.J."/>
            <person name="Rosovitz M.J."/>
            <person name="Sundaram J.P."/>
            <person name="Daugherty S.C."/>
            <person name="Davidsen T."/>
            <person name="Durkin A.S."/>
            <person name="Gwinn M.L."/>
            <person name="Haft D.H."/>
            <person name="Selengut J.D."/>
            <person name="Sullivan S.A."/>
            <person name="Zafar N."/>
            <person name="Zhou L."/>
            <person name="Benahmed F."/>
            <person name="Forberger H."/>
            <person name="Halpin R."/>
            <person name="Mulligan S."/>
            <person name="Robinson J."/>
            <person name="White O."/>
            <person name="Rikihisa Y."/>
            <person name="Tettelin H."/>
        </authorList>
    </citation>
    <scope>NUCLEOTIDE SEQUENCE [LARGE SCALE GENOMIC DNA]</scope>
    <source>
        <strain>ATCC VR-367 / Miyayama</strain>
    </source>
</reference>
<comment type="function">
    <text evidence="1">Catalyzes the radical-mediated insertion of two sulfur atoms into the C-6 and C-8 positions of the octanoyl moiety bound to the lipoyl domains of lipoate-dependent enzymes, thereby converting the octanoylated domains into lipoylated derivatives.</text>
</comment>
<comment type="catalytic activity">
    <reaction evidence="1">
        <text>[[Fe-S] cluster scaffold protein carrying a second [4Fe-4S](2+) cluster] + N(6)-octanoyl-L-lysyl-[protein] + 2 oxidized [2Fe-2S]-[ferredoxin] + 2 S-adenosyl-L-methionine + 4 H(+) = [[Fe-S] cluster scaffold protein] + N(6)-[(R)-dihydrolipoyl]-L-lysyl-[protein] + 4 Fe(3+) + 2 hydrogen sulfide + 2 5'-deoxyadenosine + 2 L-methionine + 2 reduced [2Fe-2S]-[ferredoxin]</text>
        <dbReference type="Rhea" id="RHEA:16585"/>
        <dbReference type="Rhea" id="RHEA-COMP:9928"/>
        <dbReference type="Rhea" id="RHEA-COMP:10000"/>
        <dbReference type="Rhea" id="RHEA-COMP:10001"/>
        <dbReference type="Rhea" id="RHEA-COMP:10475"/>
        <dbReference type="Rhea" id="RHEA-COMP:14568"/>
        <dbReference type="Rhea" id="RHEA-COMP:14569"/>
        <dbReference type="ChEBI" id="CHEBI:15378"/>
        <dbReference type="ChEBI" id="CHEBI:17319"/>
        <dbReference type="ChEBI" id="CHEBI:29034"/>
        <dbReference type="ChEBI" id="CHEBI:29919"/>
        <dbReference type="ChEBI" id="CHEBI:33722"/>
        <dbReference type="ChEBI" id="CHEBI:33737"/>
        <dbReference type="ChEBI" id="CHEBI:33738"/>
        <dbReference type="ChEBI" id="CHEBI:57844"/>
        <dbReference type="ChEBI" id="CHEBI:59789"/>
        <dbReference type="ChEBI" id="CHEBI:78809"/>
        <dbReference type="ChEBI" id="CHEBI:83100"/>
        <dbReference type="EC" id="2.8.1.8"/>
    </reaction>
</comment>
<comment type="cofactor">
    <cofactor evidence="1">
        <name>[4Fe-4S] cluster</name>
        <dbReference type="ChEBI" id="CHEBI:49883"/>
    </cofactor>
    <text evidence="1">Binds 2 [4Fe-4S] clusters per subunit. One cluster is coordinated with 3 cysteines and an exchangeable S-adenosyl-L-methionine.</text>
</comment>
<comment type="pathway">
    <text evidence="1">Protein modification; protein lipoylation via endogenous pathway; protein N(6)-(lipoyl)lysine from octanoyl-[acyl-carrier-protein]: step 2/2.</text>
</comment>
<comment type="subcellular location">
    <subcellularLocation>
        <location evidence="1">Cytoplasm</location>
    </subcellularLocation>
</comment>
<comment type="similarity">
    <text evidence="1">Belongs to the radical SAM superfamily. Lipoyl synthase family.</text>
</comment>
<name>LIPA_NEOSM</name>
<organism>
    <name type="scientific">Neorickettsia sennetsu (strain ATCC VR-367 / Miyayama)</name>
    <name type="common">Ehrlichia sennetsu</name>
    <dbReference type="NCBI Taxonomy" id="222891"/>
    <lineage>
        <taxon>Bacteria</taxon>
        <taxon>Pseudomonadati</taxon>
        <taxon>Pseudomonadota</taxon>
        <taxon>Alphaproteobacteria</taxon>
        <taxon>Rickettsiales</taxon>
        <taxon>Anaplasmataceae</taxon>
        <taxon>Neorickettsia</taxon>
    </lineage>
</organism>
<sequence>MERTIEKPRIRVSADNRAFLETSRLVSACGLNTVCQEAACPNISECWSSKHVTVMILGSVCTRACRFCNVTTGKPELLDPHEPEKLASAVGKLGLRHVVITSVDRDDLDDGGAEHFASCVRRIRETSPGTSIEVLTPDFLGKVGARDIIIAAAPDVFNHNVETVPRLHPKIRIKARYFNSLSLLEEVKRKDPRIFTKSGLMLGLGEERSEVLQVMDDMRVAGIDFLTIGQYLRPSKKHMEVQRYATDEEFQYYKEAAYARGFLMVASSALTRSSYHADEDFLHLKNARAGALAKLV</sequence>
<dbReference type="EC" id="2.8.1.8" evidence="1"/>
<dbReference type="EMBL" id="CP000237">
    <property type="protein sequence ID" value="ABD45978.1"/>
    <property type="molecule type" value="Genomic_DNA"/>
</dbReference>
<dbReference type="RefSeq" id="WP_011451718.1">
    <property type="nucleotide sequence ID" value="NC_007798.1"/>
</dbReference>
<dbReference type="SMR" id="Q2GE84"/>
<dbReference type="STRING" id="222891.NSE_0322"/>
<dbReference type="KEGG" id="nse:NSE_0322"/>
<dbReference type="eggNOG" id="COG0320">
    <property type="taxonomic scope" value="Bacteria"/>
</dbReference>
<dbReference type="HOGENOM" id="CLU_033144_2_1_5"/>
<dbReference type="OrthoDB" id="9787898at2"/>
<dbReference type="UniPathway" id="UPA00538">
    <property type="reaction ID" value="UER00593"/>
</dbReference>
<dbReference type="Proteomes" id="UP000001942">
    <property type="component" value="Chromosome"/>
</dbReference>
<dbReference type="GO" id="GO:0005737">
    <property type="term" value="C:cytoplasm"/>
    <property type="evidence" value="ECO:0007669"/>
    <property type="project" value="UniProtKB-SubCell"/>
</dbReference>
<dbReference type="GO" id="GO:0051539">
    <property type="term" value="F:4 iron, 4 sulfur cluster binding"/>
    <property type="evidence" value="ECO:0007669"/>
    <property type="project" value="UniProtKB-UniRule"/>
</dbReference>
<dbReference type="GO" id="GO:0016992">
    <property type="term" value="F:lipoate synthase activity"/>
    <property type="evidence" value="ECO:0007669"/>
    <property type="project" value="UniProtKB-UniRule"/>
</dbReference>
<dbReference type="GO" id="GO:0046872">
    <property type="term" value="F:metal ion binding"/>
    <property type="evidence" value="ECO:0007669"/>
    <property type="project" value="UniProtKB-KW"/>
</dbReference>
<dbReference type="CDD" id="cd01335">
    <property type="entry name" value="Radical_SAM"/>
    <property type="match status" value="1"/>
</dbReference>
<dbReference type="FunFam" id="3.20.20.70:FF:000040">
    <property type="entry name" value="Lipoyl synthase"/>
    <property type="match status" value="1"/>
</dbReference>
<dbReference type="Gene3D" id="3.20.20.70">
    <property type="entry name" value="Aldolase class I"/>
    <property type="match status" value="1"/>
</dbReference>
<dbReference type="HAMAP" id="MF_00206">
    <property type="entry name" value="Lipoyl_synth"/>
    <property type="match status" value="1"/>
</dbReference>
<dbReference type="InterPro" id="IPR013785">
    <property type="entry name" value="Aldolase_TIM"/>
</dbReference>
<dbReference type="InterPro" id="IPR006638">
    <property type="entry name" value="Elp3/MiaA/NifB-like_rSAM"/>
</dbReference>
<dbReference type="InterPro" id="IPR003698">
    <property type="entry name" value="Lipoyl_synth"/>
</dbReference>
<dbReference type="InterPro" id="IPR007197">
    <property type="entry name" value="rSAM"/>
</dbReference>
<dbReference type="NCBIfam" id="TIGR00510">
    <property type="entry name" value="lipA"/>
    <property type="match status" value="1"/>
</dbReference>
<dbReference type="NCBIfam" id="NF004019">
    <property type="entry name" value="PRK05481.1"/>
    <property type="match status" value="1"/>
</dbReference>
<dbReference type="NCBIfam" id="NF009544">
    <property type="entry name" value="PRK12928.1"/>
    <property type="match status" value="1"/>
</dbReference>
<dbReference type="PANTHER" id="PTHR10949">
    <property type="entry name" value="LIPOYL SYNTHASE"/>
    <property type="match status" value="1"/>
</dbReference>
<dbReference type="PANTHER" id="PTHR10949:SF0">
    <property type="entry name" value="LIPOYL SYNTHASE, MITOCHONDRIAL"/>
    <property type="match status" value="1"/>
</dbReference>
<dbReference type="Pfam" id="PF04055">
    <property type="entry name" value="Radical_SAM"/>
    <property type="match status" value="1"/>
</dbReference>
<dbReference type="PIRSF" id="PIRSF005963">
    <property type="entry name" value="Lipoyl_synth"/>
    <property type="match status" value="1"/>
</dbReference>
<dbReference type="SFLD" id="SFLDF00271">
    <property type="entry name" value="lipoyl_synthase"/>
    <property type="match status" value="1"/>
</dbReference>
<dbReference type="SFLD" id="SFLDG01058">
    <property type="entry name" value="lipoyl_synthase_like"/>
    <property type="match status" value="1"/>
</dbReference>
<dbReference type="SMART" id="SM00729">
    <property type="entry name" value="Elp3"/>
    <property type="match status" value="1"/>
</dbReference>
<dbReference type="SUPFAM" id="SSF102114">
    <property type="entry name" value="Radical SAM enzymes"/>
    <property type="match status" value="1"/>
</dbReference>
<dbReference type="PROSITE" id="PS51918">
    <property type="entry name" value="RADICAL_SAM"/>
    <property type="match status" value="1"/>
</dbReference>
<accession>Q2GE84</accession>